<dbReference type="EC" id="3.1.1.13" evidence="1"/>
<dbReference type="EMBL" id="CR860170">
    <property type="protein sequence ID" value="CAH92312.1"/>
    <property type="molecule type" value="mRNA"/>
</dbReference>
<dbReference type="RefSeq" id="NP_001126355.1">
    <property type="nucleotide sequence ID" value="NM_001132883.1"/>
</dbReference>
<dbReference type="FunCoup" id="Q5R7E8">
    <property type="interactions" value="547"/>
</dbReference>
<dbReference type="ESTHER" id="ponab-cb043">
    <property type="family name" value="LIDHydrolase"/>
</dbReference>
<dbReference type="GeneID" id="100173336"/>
<dbReference type="KEGG" id="pon:100173336"/>
<dbReference type="CTD" id="60526"/>
<dbReference type="eggNOG" id="KOG3975">
    <property type="taxonomic scope" value="Eukaryota"/>
</dbReference>
<dbReference type="InParanoid" id="Q5R7E8"/>
<dbReference type="OrthoDB" id="448051at2759"/>
<dbReference type="Proteomes" id="UP000001595">
    <property type="component" value="Unplaced"/>
</dbReference>
<dbReference type="GO" id="GO:0005783">
    <property type="term" value="C:endoplasmic reticulum"/>
    <property type="evidence" value="ECO:0000250"/>
    <property type="project" value="UniProtKB"/>
</dbReference>
<dbReference type="GO" id="GO:0005811">
    <property type="term" value="C:lipid droplet"/>
    <property type="evidence" value="ECO:0000250"/>
    <property type="project" value="UniProtKB"/>
</dbReference>
<dbReference type="GO" id="GO:0004771">
    <property type="term" value="F:sterol ester esterase activity"/>
    <property type="evidence" value="ECO:0000250"/>
    <property type="project" value="UniProtKB"/>
</dbReference>
<dbReference type="GO" id="GO:0042632">
    <property type="term" value="P:cholesterol homeostasis"/>
    <property type="evidence" value="ECO:0000250"/>
    <property type="project" value="UniProtKB"/>
</dbReference>
<dbReference type="GO" id="GO:0035356">
    <property type="term" value="P:intracellular triglyceride homeostasis"/>
    <property type="evidence" value="ECO:0000250"/>
    <property type="project" value="UniProtKB"/>
</dbReference>
<dbReference type="GO" id="GO:0160077">
    <property type="term" value="P:lipid droplet fusion"/>
    <property type="evidence" value="ECO:0000250"/>
    <property type="project" value="UniProtKB"/>
</dbReference>
<dbReference type="GO" id="GO:0019915">
    <property type="term" value="P:lipid storage"/>
    <property type="evidence" value="ECO:0007669"/>
    <property type="project" value="InterPro"/>
</dbReference>
<dbReference type="FunFam" id="3.40.50.1820:FF:000068">
    <property type="entry name" value="Lipid droplet associated hydrolase"/>
    <property type="match status" value="1"/>
</dbReference>
<dbReference type="Gene3D" id="3.40.50.1820">
    <property type="entry name" value="alpha/beta hydrolase"/>
    <property type="match status" value="1"/>
</dbReference>
<dbReference type="InterPro" id="IPR029058">
    <property type="entry name" value="AB_hydrolase_fold"/>
</dbReference>
<dbReference type="InterPro" id="IPR019363">
    <property type="entry name" value="LDAH"/>
</dbReference>
<dbReference type="PANTHER" id="PTHR13390">
    <property type="entry name" value="LIPASE"/>
    <property type="match status" value="1"/>
</dbReference>
<dbReference type="PANTHER" id="PTHR13390:SF0">
    <property type="entry name" value="LIPID DROPLET-ASSOCIATED HYDROLASE"/>
    <property type="match status" value="1"/>
</dbReference>
<dbReference type="Pfam" id="PF10230">
    <property type="entry name" value="LIDHydrolase"/>
    <property type="match status" value="1"/>
</dbReference>
<dbReference type="SUPFAM" id="SSF53474">
    <property type="entry name" value="alpha/beta-Hydrolases"/>
    <property type="match status" value="1"/>
</dbReference>
<dbReference type="PROSITE" id="PS00120">
    <property type="entry name" value="LIPASE_SER"/>
    <property type="match status" value="1"/>
</dbReference>
<comment type="function">
    <text evidence="1">Probable serine lipid hydrolase associated with lipid droplets. Has low cholesterol esterase activity. Appears to lack triglyceride lipase activity. Involved in cholesterol and triglyceride homeostasis; stimulates cellular triglyceride accumulation and cellular cholesterol release. Acts antagonistically with PNPLA2/ATGL in regulation of cellular lipid stores. May regulate triglyceride accumulation indirectly through stimulation of PNPLA2/ATGL ubiquitination and proteasomal degradation. Promotes microtubule-dependent lipid droplet fusion. Highly expressed in macrophage-rich areas in atherosclerotic lesions, suggesting that it could promote cholesterol ester turnover in macrophages.</text>
</comment>
<comment type="catalytic activity">
    <reaction evidence="1">
        <text>a cholesterol ester + H2O = cholesterol + a fatty acid + H(+)</text>
        <dbReference type="Rhea" id="RHEA:36403"/>
        <dbReference type="ChEBI" id="CHEBI:15377"/>
        <dbReference type="ChEBI" id="CHEBI:15378"/>
        <dbReference type="ChEBI" id="CHEBI:16113"/>
        <dbReference type="ChEBI" id="CHEBI:17002"/>
        <dbReference type="ChEBI" id="CHEBI:28868"/>
        <dbReference type="EC" id="3.1.1.13"/>
    </reaction>
    <physiologicalReaction direction="left-to-right" evidence="1">
        <dbReference type="Rhea" id="RHEA:36404"/>
    </physiologicalReaction>
</comment>
<comment type="subcellular location">
    <subcellularLocation>
        <location evidence="1">Lipid droplet</location>
    </subcellularLocation>
    <subcellularLocation>
        <location evidence="1">Endoplasmic reticulum</location>
    </subcellularLocation>
    <text evidence="1">Localizes to the endoplasmic reticulum in absence of lipid droplets and translocates to lipid droplets upon lipid storage induction (By similarity). Lipid droplet localization does not require hydrolase activity (By similarity).</text>
</comment>
<comment type="similarity">
    <text evidence="4">Belongs to the AB hydrolase superfamily. LDAH family.</text>
</comment>
<comment type="caution">
    <text evidence="1">The catalytic activity is unsure despite catalytic sites being conserved (By similarity). May have low cholesterol esterase activity but lack triglyceride lipase activity (By similarity).</text>
</comment>
<feature type="chain" id="PRO_0000300126" description="Lipid droplet-associated hydrolase">
    <location>
        <begin position="1"/>
        <end position="325"/>
    </location>
</feature>
<feature type="active site" description="Nucleophile" evidence="3">
    <location>
        <position position="139"/>
    </location>
</feature>
<feature type="active site" description="Charge relay system" evidence="2">
    <location>
        <position position="271"/>
    </location>
</feature>
<feature type="active site" description="Charge relay system" evidence="2">
    <location>
        <position position="300"/>
    </location>
</feature>
<protein>
    <recommendedName>
        <fullName evidence="1">Lipid droplet-associated hydrolase</fullName>
        <ecNumber evidence="1">3.1.1.13</ecNumber>
    </recommendedName>
    <alternativeName>
        <fullName evidence="1">Lipid droplet-associated serine hydrolase</fullName>
    </alternativeName>
</protein>
<proteinExistence type="evidence at transcript level"/>
<accession>Q5R7E8</accession>
<evidence type="ECO:0000250" key="1">
    <source>
        <dbReference type="UniProtKB" id="Q8BVA5"/>
    </source>
</evidence>
<evidence type="ECO:0000250" key="2">
    <source>
        <dbReference type="UniProtKB" id="Q9H6V9"/>
    </source>
</evidence>
<evidence type="ECO:0000255" key="3">
    <source>
        <dbReference type="PROSITE-ProRule" id="PRU10037"/>
    </source>
</evidence>
<evidence type="ECO:0000305" key="4"/>
<reference key="1">
    <citation type="submission" date="2004-11" db="EMBL/GenBank/DDBJ databases">
        <authorList>
            <consortium name="The German cDNA consortium"/>
        </authorList>
    </citation>
    <scope>NUCLEOTIDE SEQUENCE [LARGE SCALE MRNA]</scope>
    <source>
        <tissue>Kidney</tissue>
    </source>
</reference>
<gene>
    <name evidence="1" type="primary">LDAH</name>
</gene>
<organism>
    <name type="scientific">Pongo abelii</name>
    <name type="common">Sumatran orangutan</name>
    <name type="synonym">Pongo pygmaeus abelii</name>
    <dbReference type="NCBI Taxonomy" id="9601"/>
    <lineage>
        <taxon>Eukaryota</taxon>
        <taxon>Metazoa</taxon>
        <taxon>Chordata</taxon>
        <taxon>Craniata</taxon>
        <taxon>Vertebrata</taxon>
        <taxon>Euteleostomi</taxon>
        <taxon>Mammalia</taxon>
        <taxon>Eutheria</taxon>
        <taxon>Euarchontoglires</taxon>
        <taxon>Primates</taxon>
        <taxon>Haplorrhini</taxon>
        <taxon>Catarrhini</taxon>
        <taxon>Hominidae</taxon>
        <taxon>Pongo</taxon>
    </lineage>
</organism>
<sequence>MDSELKEEIPVHEEFILCGGAETQVLKCGPWTDLFNDQSVKRPKLLIFIIPGNPGFSAFYVPFAKALYSLTNRCFPVWTISHAGHALAPKDKKILTTSEDSNAQEIKDIYGLNGQIEHKLAFLRTHVPKDMKLVLIGHSVGSYFTLQMLKRVPELPVIRAFLLFPTIERMSESPNGRIATPLLCWSRYVLYVTGYLLLKPCPEKIKSLLIRRGLQVMNLENEFSPLNILEPFCLANAAHLGGQEMMEVVKRDDETIREHLCKLTFYYGTIDPWCPKEYYEDIKKDFPEGDIRLCEKNIPHAFIIHFNQEMADMIADSLKDDLSKM</sequence>
<keyword id="KW-0256">Endoplasmic reticulum</keyword>
<keyword id="KW-0378">Hydrolase</keyword>
<keyword id="KW-0551">Lipid droplet</keyword>
<keyword id="KW-1185">Reference proteome</keyword>
<name>LDAH_PONAB</name>